<proteinExistence type="evidence at protein level"/>
<name>PYRD_TRYB2</name>
<gene>
    <name type="ORF">Tb927.5.3830</name>
</gene>
<organism>
    <name type="scientific">Trypanosoma brucei brucei (strain 927/4 GUTat10.1)</name>
    <dbReference type="NCBI Taxonomy" id="185431"/>
    <lineage>
        <taxon>Eukaryota</taxon>
        <taxon>Discoba</taxon>
        <taxon>Euglenozoa</taxon>
        <taxon>Kinetoplastea</taxon>
        <taxon>Metakinetoplastina</taxon>
        <taxon>Trypanosomatida</taxon>
        <taxon>Trypanosomatidae</taxon>
        <taxon>Trypanosoma</taxon>
    </lineage>
</organism>
<reference key="1">
    <citation type="journal article" date="2005" name="Science">
        <title>The genome of the African trypanosome Trypanosoma brucei.</title>
        <authorList>
            <person name="Berriman M."/>
            <person name="Ghedin E."/>
            <person name="Hertz-Fowler C."/>
            <person name="Blandin G."/>
            <person name="Renauld H."/>
            <person name="Bartholomeu D.C."/>
            <person name="Lennard N.J."/>
            <person name="Caler E."/>
            <person name="Hamlin N.E."/>
            <person name="Haas B."/>
            <person name="Bohme U."/>
            <person name="Hannick L."/>
            <person name="Aslett M.A."/>
            <person name="Shallom J."/>
            <person name="Marcello L."/>
            <person name="Hou L."/>
            <person name="Wickstead B."/>
            <person name="Alsmark U.C.M."/>
            <person name="Arrowsmith C."/>
            <person name="Atkin R.J."/>
            <person name="Barron A.J."/>
            <person name="Bringaud F."/>
            <person name="Brooks K."/>
            <person name="Carrington M."/>
            <person name="Cherevach I."/>
            <person name="Chillingworth T.J."/>
            <person name="Churcher C."/>
            <person name="Clark L.N."/>
            <person name="Corton C.H."/>
            <person name="Cronin A."/>
            <person name="Davies R.M."/>
            <person name="Doggett J."/>
            <person name="Djikeng A."/>
            <person name="Feldblyum T."/>
            <person name="Field M.C."/>
            <person name="Fraser A."/>
            <person name="Goodhead I."/>
            <person name="Hance Z."/>
            <person name="Harper D."/>
            <person name="Harris B.R."/>
            <person name="Hauser H."/>
            <person name="Hostetler J."/>
            <person name="Ivens A."/>
            <person name="Jagels K."/>
            <person name="Johnson D."/>
            <person name="Johnson J."/>
            <person name="Jones K."/>
            <person name="Kerhornou A.X."/>
            <person name="Koo H."/>
            <person name="Larke N."/>
            <person name="Landfear S."/>
            <person name="Larkin C."/>
            <person name="Leech V."/>
            <person name="Line A."/>
            <person name="Lord A."/>
            <person name="Macleod A."/>
            <person name="Mooney P.J."/>
            <person name="Moule S."/>
            <person name="Martin D.M."/>
            <person name="Morgan G.W."/>
            <person name="Mungall K."/>
            <person name="Norbertczak H."/>
            <person name="Ormond D."/>
            <person name="Pai G."/>
            <person name="Peacock C.S."/>
            <person name="Peterson J."/>
            <person name="Quail M.A."/>
            <person name="Rabbinowitsch E."/>
            <person name="Rajandream M.A."/>
            <person name="Reitter C."/>
            <person name="Salzberg S.L."/>
            <person name="Sanders M."/>
            <person name="Schobel S."/>
            <person name="Sharp S."/>
            <person name="Simmonds M."/>
            <person name="Simpson A.J."/>
            <person name="Tallon L."/>
            <person name="Turner C.M."/>
            <person name="Tait A."/>
            <person name="Tivey A.R."/>
            <person name="Van Aken S."/>
            <person name="Walker D."/>
            <person name="Wanless D."/>
            <person name="Wang S."/>
            <person name="White B."/>
            <person name="White O."/>
            <person name="Whitehead S."/>
            <person name="Woodward J."/>
            <person name="Wortman J."/>
            <person name="Adams M.D."/>
            <person name="Embley T.M."/>
            <person name="Gull K."/>
            <person name="Ullu E."/>
            <person name="Barry J.D."/>
            <person name="Fairlamb A.H."/>
            <person name="Opperdoes F."/>
            <person name="Barrell B.G."/>
            <person name="Donelson J.E."/>
            <person name="Hall N."/>
            <person name="Fraser C.M."/>
            <person name="Melville S.E."/>
            <person name="El-Sayed N.M.A."/>
        </authorList>
    </citation>
    <scope>NUCLEOTIDE SEQUENCE [LARGE SCALE GENOMIC DNA]</scope>
    <source>
        <strain evidence="4">927/4 GUTat10.1</strain>
    </source>
</reference>
<reference key="2">
    <citation type="journal article" date="2008" name="Mol. Microbiol.">
        <title>Characterization of Trypanosoma brucei dihydroorotate dehydrogenase as a possible drug target; structural, kinetic and RNAi studies.</title>
        <authorList>
            <person name="Arakaki T.L."/>
            <person name="Buckner F.S."/>
            <person name="Gillespie J.R."/>
            <person name="Malmquist N.A."/>
            <person name="Phillips M.A."/>
            <person name="Kalyuzhniy O."/>
            <person name="Luft J.R."/>
            <person name="DeTitta G.T."/>
            <person name="Verlinde C.L.M.J."/>
            <person name="Van Voorhis W.C."/>
            <person name="Hol W.G."/>
            <person name="Merritt E.A."/>
        </authorList>
    </citation>
    <scope>X-RAY CRYSTALLOGRAPHY (1.95 ANGSTROMS) IN COMPLEX WITH FMN AND OROTATE</scope>
    <scope>COFACTOR</scope>
    <scope>SUBUNIT</scope>
    <scope>BIOPHYSICOCHEMICAL PROPERTIES</scope>
    <scope>ENZYME KINETICS</scope>
    <source>
        <strain>927/4 GUTat10.1</strain>
    </source>
</reference>
<keyword id="KW-0002">3D-structure</keyword>
<keyword id="KW-0963">Cytoplasm</keyword>
<keyword id="KW-0285">Flavoprotein</keyword>
<keyword id="KW-0288">FMN</keyword>
<keyword id="KW-0560">Oxidoreductase</keyword>
<keyword id="KW-0665">Pyrimidine biosynthesis</keyword>
<keyword id="KW-1185">Reference proteome</keyword>
<feature type="chain" id="PRO_0000409559" description="Dihydroorotate dehydrogenase (fumarate)">
    <location>
        <begin position="1"/>
        <end position="313"/>
    </location>
</feature>
<feature type="active site" description="Nucleophile" evidence="1">
    <location>
        <position position="131"/>
    </location>
</feature>
<feature type="binding site" evidence="2">
    <location>
        <position position="20"/>
    </location>
    <ligand>
        <name>FMN</name>
        <dbReference type="ChEBI" id="CHEBI:58210"/>
    </ligand>
</feature>
<feature type="binding site" evidence="2">
    <location>
        <begin position="44"/>
        <end position="45"/>
    </location>
    <ligand>
        <name>FMN</name>
        <dbReference type="ChEBI" id="CHEBI:58210"/>
    </ligand>
</feature>
<feature type="binding site">
    <location>
        <position position="44"/>
    </location>
    <ligand>
        <name>substrate</name>
    </ligand>
</feature>
<feature type="binding site">
    <location>
        <begin position="68"/>
        <end position="72"/>
    </location>
    <ligand>
        <name>substrate</name>
    </ligand>
</feature>
<feature type="binding site" evidence="2">
    <location>
        <position position="128"/>
    </location>
    <ligand>
        <name>FMN</name>
        <dbReference type="ChEBI" id="CHEBI:58210"/>
    </ligand>
</feature>
<feature type="binding site">
    <location>
        <position position="128"/>
    </location>
    <ligand>
        <name>substrate</name>
    </ligand>
</feature>
<feature type="binding site">
    <location>
        <position position="133"/>
    </location>
    <ligand>
        <name>substrate</name>
    </ligand>
</feature>
<feature type="binding site" evidence="2">
    <location>
        <position position="165"/>
    </location>
    <ligand>
        <name>FMN</name>
        <dbReference type="ChEBI" id="CHEBI:58210"/>
    </ligand>
</feature>
<feature type="binding site" evidence="2">
    <location>
        <position position="194"/>
    </location>
    <ligand>
        <name>FMN</name>
        <dbReference type="ChEBI" id="CHEBI:58210"/>
    </ligand>
</feature>
<feature type="binding site">
    <location>
        <begin position="195"/>
        <end position="196"/>
    </location>
    <ligand>
        <name>substrate</name>
    </ligand>
</feature>
<feature type="binding site" evidence="2">
    <location>
        <position position="223"/>
    </location>
    <ligand>
        <name>FMN</name>
        <dbReference type="ChEBI" id="CHEBI:58210"/>
    </ligand>
</feature>
<feature type="binding site" evidence="2">
    <location>
        <begin position="249"/>
        <end position="251"/>
    </location>
    <ligand>
        <name>FMN</name>
        <dbReference type="ChEBI" id="CHEBI:58210"/>
    </ligand>
</feature>
<feature type="binding site" evidence="2">
    <location>
        <position position="249"/>
    </location>
    <ligand>
        <name>FMN</name>
        <dbReference type="ChEBI" id="CHEBI:58210"/>
    </ligand>
</feature>
<feature type="binding site" evidence="2">
    <location>
        <begin position="272"/>
        <end position="273"/>
    </location>
    <ligand>
        <name>FMN</name>
        <dbReference type="ChEBI" id="CHEBI:58210"/>
    </ligand>
</feature>
<feature type="strand" evidence="5">
    <location>
        <begin position="5"/>
        <end position="7"/>
    </location>
</feature>
<feature type="strand" evidence="5">
    <location>
        <begin position="10"/>
        <end position="18"/>
    </location>
</feature>
<feature type="helix" evidence="5">
    <location>
        <begin position="27"/>
        <end position="35"/>
    </location>
</feature>
<feature type="strand" evidence="5">
    <location>
        <begin position="41"/>
        <end position="46"/>
    </location>
</feature>
<feature type="strand" evidence="5">
    <location>
        <begin position="59"/>
        <end position="62"/>
    </location>
</feature>
<feature type="strand" evidence="5">
    <location>
        <begin position="65"/>
        <end position="68"/>
    </location>
</feature>
<feature type="helix" evidence="5">
    <location>
        <begin position="77"/>
        <end position="86"/>
    </location>
</feature>
<feature type="turn" evidence="5">
    <location>
        <begin position="90"/>
        <end position="92"/>
    </location>
</feature>
<feature type="strand" evidence="5">
    <location>
        <begin position="95"/>
        <end position="99"/>
    </location>
</feature>
<feature type="helix" evidence="5">
    <location>
        <begin position="104"/>
        <end position="121"/>
    </location>
</feature>
<feature type="strand" evidence="5">
    <location>
        <begin position="124"/>
        <end position="128"/>
    </location>
</feature>
<feature type="helix" evidence="5">
    <location>
        <begin position="140"/>
        <end position="142"/>
    </location>
</feature>
<feature type="helix" evidence="5">
    <location>
        <begin position="144"/>
        <end position="158"/>
    </location>
</feature>
<feature type="strand" evidence="5">
    <location>
        <begin position="162"/>
        <end position="166"/>
    </location>
</feature>
<feature type="helix" evidence="5">
    <location>
        <begin position="172"/>
        <end position="182"/>
    </location>
</feature>
<feature type="strand" evidence="5">
    <location>
        <begin position="188"/>
        <end position="193"/>
    </location>
</feature>
<feature type="strand" evidence="5">
    <location>
        <begin position="197"/>
        <end position="201"/>
    </location>
</feature>
<feature type="turn" evidence="5">
    <location>
        <begin position="205"/>
        <end position="208"/>
    </location>
</feature>
<feature type="strand" evidence="5">
    <location>
        <begin position="209"/>
        <end position="211"/>
    </location>
</feature>
<feature type="helix" evidence="5">
    <location>
        <begin position="214"/>
        <end position="217"/>
    </location>
</feature>
<feature type="strand" evidence="5">
    <location>
        <begin position="218"/>
        <end position="223"/>
    </location>
</feature>
<feature type="helix" evidence="5">
    <location>
        <begin position="224"/>
        <end position="226"/>
    </location>
</feature>
<feature type="helix" evidence="5">
    <location>
        <begin position="227"/>
        <end position="240"/>
    </location>
</feature>
<feature type="strand" evidence="5">
    <location>
        <begin position="244"/>
        <end position="250"/>
    </location>
</feature>
<feature type="helix" evidence="5">
    <location>
        <begin position="255"/>
        <end position="264"/>
    </location>
</feature>
<feature type="strand" evidence="5">
    <location>
        <begin position="266"/>
        <end position="271"/>
    </location>
</feature>
<feature type="helix" evidence="5">
    <location>
        <begin position="273"/>
        <end position="278"/>
    </location>
</feature>
<feature type="helix" evidence="5">
    <location>
        <begin position="282"/>
        <end position="297"/>
    </location>
</feature>
<feature type="helix" evidence="5">
    <location>
        <begin position="302"/>
        <end position="304"/>
    </location>
</feature>
<feature type="turn" evidence="5">
    <location>
        <begin position="305"/>
        <end position="307"/>
    </location>
</feature>
<sequence>MSLKVNILGHEFSNPFMNAAGVLCTTEEDLRRMTESESGSLIGKSCTLAPRTGNPEPRYFGLPLGSINSMGLPNLGVDFYLSYAAQTHDYSRKPLFLSMSGLSVEESVEMVKKLAPITKEKGTILELNLSCPNVPGKPQVGYDFDTTRTYLQKVSEAYGLPFGVKMPPYFDIAHFDMAAAVLNDFPLVKFITCVNSIGNGLVIDPANETVVIKPKQGFGGLGGKYVLPTALANVNAFFRRCPDKLVFGCGGVYSGEEAFLHILAGASMVQVGTALHDEGPIIFARLNKELQEIMTNKGYKTLDEFRGRVKTMD</sequence>
<protein>
    <recommendedName>
        <fullName>Dihydroorotate dehydrogenase (fumarate)</fullName>
        <shortName>DHOD</shortName>
        <shortName>DHODase</shortName>
        <shortName>DHOdehase</shortName>
        <ecNumber>1.3.98.1</ecNumber>
    </recommendedName>
    <alternativeName>
        <fullName>Dihydroorotate oxidase</fullName>
    </alternativeName>
</protein>
<evidence type="ECO:0000250" key="1"/>
<evidence type="ECO:0000269" key="2">
    <source>
    </source>
</evidence>
<evidence type="ECO:0000305" key="3"/>
<evidence type="ECO:0000312" key="4">
    <source>
        <dbReference type="Proteomes" id="UP000008524"/>
    </source>
</evidence>
<evidence type="ECO:0007829" key="5">
    <source>
        <dbReference type="PDB" id="5XFW"/>
    </source>
</evidence>
<dbReference type="EC" id="1.3.98.1"/>
<dbReference type="EMBL" id="AC159455">
    <property type="protein sequence ID" value="AAX70836.1"/>
    <property type="molecule type" value="Genomic_DNA"/>
</dbReference>
<dbReference type="EMBL" id="CP000068">
    <property type="protein sequence ID" value="AAZ11494.1"/>
    <property type="molecule type" value="Genomic_DNA"/>
</dbReference>
<dbReference type="PDB" id="2B4G">
    <property type="method" value="X-ray"/>
    <property type="resolution" value="1.95 A"/>
    <property type="chains" value="A/B/C/D=1-313"/>
</dbReference>
<dbReference type="PDB" id="5XFV">
    <property type="method" value="X-ray"/>
    <property type="resolution" value="1.79 A"/>
    <property type="chains" value="A/B/C/D=1-313"/>
</dbReference>
<dbReference type="PDB" id="5XFW">
    <property type="method" value="X-ray"/>
    <property type="resolution" value="1.60 A"/>
    <property type="chains" value="A/B/C/D=1-313"/>
</dbReference>
<dbReference type="PDBsum" id="2B4G"/>
<dbReference type="PDBsum" id="5XFV"/>
<dbReference type="PDBsum" id="5XFW"/>
<dbReference type="SMR" id="Q57U83"/>
<dbReference type="FunCoup" id="Q57U83">
    <property type="interactions" value="245"/>
</dbReference>
<dbReference type="STRING" id="185431.Q57U83"/>
<dbReference type="PaxDb" id="5691-AAZ11494"/>
<dbReference type="GeneID" id="3657493"/>
<dbReference type="KEGG" id="tbr:Tb927.5.3830"/>
<dbReference type="VEuPathDB" id="TriTrypDB:Tb927.5.3830"/>
<dbReference type="eggNOG" id="KOG1436">
    <property type="taxonomic scope" value="Eukaryota"/>
</dbReference>
<dbReference type="InParanoid" id="Q57U83"/>
<dbReference type="OMA" id="FDFAHFD"/>
<dbReference type="OrthoDB" id="14784at2759"/>
<dbReference type="UniPathway" id="UPA00070"/>
<dbReference type="EvolutionaryTrace" id="Q57U83"/>
<dbReference type="Proteomes" id="UP000008524">
    <property type="component" value="Chromosome 5"/>
</dbReference>
<dbReference type="GO" id="GO:0097014">
    <property type="term" value="C:ciliary plasm"/>
    <property type="evidence" value="ECO:0000314"/>
    <property type="project" value="GeneDB"/>
</dbReference>
<dbReference type="GO" id="GO:0005737">
    <property type="term" value="C:cytoplasm"/>
    <property type="evidence" value="ECO:0000314"/>
    <property type="project" value="GeneDB"/>
</dbReference>
<dbReference type="GO" id="GO:0020015">
    <property type="term" value="C:glycosome"/>
    <property type="evidence" value="ECO:0000266"/>
    <property type="project" value="GeneDB"/>
</dbReference>
<dbReference type="GO" id="GO:0005654">
    <property type="term" value="C:nucleoplasm"/>
    <property type="evidence" value="ECO:0000314"/>
    <property type="project" value="GeneDB"/>
</dbReference>
<dbReference type="GO" id="GO:1990663">
    <property type="term" value="F:dihydroorotate dehydrogenase (fumarate) activity"/>
    <property type="evidence" value="ECO:0007669"/>
    <property type="project" value="UniProtKB-EC"/>
</dbReference>
<dbReference type="GO" id="GO:0004152">
    <property type="term" value="F:dihydroorotate dehydrogenase activity"/>
    <property type="evidence" value="ECO:0000318"/>
    <property type="project" value="GO_Central"/>
</dbReference>
<dbReference type="GO" id="GO:0006207">
    <property type="term" value="P:'de novo' pyrimidine nucleobase biosynthetic process"/>
    <property type="evidence" value="ECO:0000318"/>
    <property type="project" value="GO_Central"/>
</dbReference>
<dbReference type="GO" id="GO:0044205">
    <property type="term" value="P:'de novo' UMP biosynthetic process"/>
    <property type="evidence" value="ECO:0007669"/>
    <property type="project" value="UniProtKB-UniPathway"/>
</dbReference>
<dbReference type="GO" id="GO:0006106">
    <property type="term" value="P:fumarate metabolic process"/>
    <property type="evidence" value="ECO:0000266"/>
    <property type="project" value="GeneDB"/>
</dbReference>
<dbReference type="CDD" id="cd04741">
    <property type="entry name" value="DHOD_1A_like"/>
    <property type="match status" value="1"/>
</dbReference>
<dbReference type="FunFam" id="3.20.20.70:FF:000027">
    <property type="entry name" value="Dihydropyrimidine dehydrogenase [NADP(+)]"/>
    <property type="match status" value="1"/>
</dbReference>
<dbReference type="Gene3D" id="3.20.20.70">
    <property type="entry name" value="Aldolase class I"/>
    <property type="match status" value="1"/>
</dbReference>
<dbReference type="InterPro" id="IPR013785">
    <property type="entry name" value="Aldolase_TIM"/>
</dbReference>
<dbReference type="InterPro" id="IPR050074">
    <property type="entry name" value="DHO_dehydrogenase"/>
</dbReference>
<dbReference type="InterPro" id="IPR033886">
    <property type="entry name" value="DHOD_1A"/>
</dbReference>
<dbReference type="InterPro" id="IPR012135">
    <property type="entry name" value="Dihydroorotate_DH_1_2"/>
</dbReference>
<dbReference type="InterPro" id="IPR005720">
    <property type="entry name" value="Dihydroorotate_DH_cat"/>
</dbReference>
<dbReference type="NCBIfam" id="NF002702">
    <property type="entry name" value="PRK02506.1"/>
    <property type="match status" value="1"/>
</dbReference>
<dbReference type="PANTHER" id="PTHR48109:SF1">
    <property type="entry name" value="DIHYDROOROTATE DEHYDROGENASE (FUMARATE)"/>
    <property type="match status" value="1"/>
</dbReference>
<dbReference type="PANTHER" id="PTHR48109">
    <property type="entry name" value="DIHYDROOROTATE DEHYDROGENASE (QUINONE), MITOCHONDRIAL-RELATED"/>
    <property type="match status" value="1"/>
</dbReference>
<dbReference type="Pfam" id="PF01180">
    <property type="entry name" value="DHO_dh"/>
    <property type="match status" value="1"/>
</dbReference>
<dbReference type="PIRSF" id="PIRSF000164">
    <property type="entry name" value="DHO_oxidase"/>
    <property type="match status" value="1"/>
</dbReference>
<dbReference type="SUPFAM" id="SSF51395">
    <property type="entry name" value="FMN-linked oxidoreductases"/>
    <property type="match status" value="1"/>
</dbReference>
<comment type="function">
    <text>Catalyzes the conversion of dihydroorotate to orotate with fumarate as the electron acceptor. Molecular oxygen can replace fumarate in vitro.</text>
</comment>
<comment type="catalytic activity">
    <reaction>
        <text>(S)-dihydroorotate + fumarate = orotate + succinate</text>
        <dbReference type="Rhea" id="RHEA:30059"/>
        <dbReference type="ChEBI" id="CHEBI:29806"/>
        <dbReference type="ChEBI" id="CHEBI:30031"/>
        <dbReference type="ChEBI" id="CHEBI:30839"/>
        <dbReference type="ChEBI" id="CHEBI:30864"/>
        <dbReference type="EC" id="1.3.98.1"/>
    </reaction>
</comment>
<comment type="cofactor">
    <cofactor evidence="2">
        <name>FMN</name>
        <dbReference type="ChEBI" id="CHEBI:58210"/>
    </cofactor>
    <text evidence="2">Binds 1 FMN per subunit.</text>
</comment>
<comment type="biophysicochemical properties">
    <kinetics>
        <KM evidence="2">14 uM for dihydroorotate</KM>
        <KM evidence="2">80 uM for fumarate</KM>
    </kinetics>
    <phDependence>
        <text evidence="2">Optimum pH is 7.8.</text>
    </phDependence>
</comment>
<comment type="pathway">
    <text>Pyrimidine metabolism; UMP biosynthesis via de novo pathway.</text>
</comment>
<comment type="subunit">
    <text evidence="2">Homodimer.</text>
</comment>
<comment type="subcellular location">
    <subcellularLocation>
        <location evidence="1">Cytoplasm</location>
    </subcellularLocation>
</comment>
<comment type="similarity">
    <text evidence="3">Belongs to the dihydroorotate dehydrogenase family. Type 1 subfamily.</text>
</comment>
<accession>Q57U83</accession>